<feature type="chain" id="PRO_1000215175" description="Peptide methionine sulfoxide reductase MsrB">
    <location>
        <begin position="1"/>
        <end position="145"/>
    </location>
</feature>
<feature type="domain" description="MsrB" evidence="2">
    <location>
        <begin position="6"/>
        <end position="129"/>
    </location>
</feature>
<feature type="active site" description="Nucleophile" evidence="2">
    <location>
        <position position="118"/>
    </location>
</feature>
<protein>
    <recommendedName>
        <fullName evidence="1">Peptide methionine sulfoxide reductase MsrB</fullName>
        <ecNumber evidence="1">1.8.4.12</ecNumber>
    </recommendedName>
    <alternativeName>
        <fullName evidence="1">Peptide-methionine (R)-S-oxide reductase</fullName>
    </alternativeName>
</protein>
<dbReference type="EC" id="1.8.4.12" evidence="1"/>
<dbReference type="EMBL" id="FM242711">
    <property type="protein sequence ID" value="CAS05633.1"/>
    <property type="molecule type" value="Genomic_DNA"/>
</dbReference>
<dbReference type="RefSeq" id="WP_003725815.1">
    <property type="nucleotide sequence ID" value="NC_012488.1"/>
</dbReference>
<dbReference type="SMR" id="C1KWF8"/>
<dbReference type="KEGG" id="lmc:Lm4b_01875"/>
<dbReference type="HOGENOM" id="CLU_031040_8_5_9"/>
<dbReference type="GO" id="GO:0005737">
    <property type="term" value="C:cytoplasm"/>
    <property type="evidence" value="ECO:0007669"/>
    <property type="project" value="TreeGrafter"/>
</dbReference>
<dbReference type="GO" id="GO:0033743">
    <property type="term" value="F:peptide-methionine (R)-S-oxide reductase activity"/>
    <property type="evidence" value="ECO:0007669"/>
    <property type="project" value="UniProtKB-UniRule"/>
</dbReference>
<dbReference type="GO" id="GO:0030091">
    <property type="term" value="P:protein repair"/>
    <property type="evidence" value="ECO:0007669"/>
    <property type="project" value="InterPro"/>
</dbReference>
<dbReference type="GO" id="GO:0006979">
    <property type="term" value="P:response to oxidative stress"/>
    <property type="evidence" value="ECO:0007669"/>
    <property type="project" value="InterPro"/>
</dbReference>
<dbReference type="FunFam" id="2.170.150.20:FF:000003">
    <property type="entry name" value="Peptide methionine sulfoxide reductase MsrB"/>
    <property type="match status" value="1"/>
</dbReference>
<dbReference type="Gene3D" id="2.170.150.20">
    <property type="entry name" value="Peptide methionine sulfoxide reductase"/>
    <property type="match status" value="1"/>
</dbReference>
<dbReference type="HAMAP" id="MF_01400">
    <property type="entry name" value="MsrB"/>
    <property type="match status" value="1"/>
</dbReference>
<dbReference type="InterPro" id="IPR028427">
    <property type="entry name" value="Met_Sox_Rdtase_MsrB"/>
</dbReference>
<dbReference type="InterPro" id="IPR002579">
    <property type="entry name" value="Met_Sox_Rdtase_MsrB_dom"/>
</dbReference>
<dbReference type="InterPro" id="IPR011057">
    <property type="entry name" value="Mss4-like_sf"/>
</dbReference>
<dbReference type="NCBIfam" id="TIGR00357">
    <property type="entry name" value="peptide-methionine (R)-S-oxide reductase MsrB"/>
    <property type="match status" value="1"/>
</dbReference>
<dbReference type="PANTHER" id="PTHR10173">
    <property type="entry name" value="METHIONINE SULFOXIDE REDUCTASE"/>
    <property type="match status" value="1"/>
</dbReference>
<dbReference type="PANTHER" id="PTHR10173:SF59">
    <property type="entry name" value="PEPTIDE METHIONINE SULFOXIDE REDUCTASE MSRA_MSRB"/>
    <property type="match status" value="1"/>
</dbReference>
<dbReference type="Pfam" id="PF01641">
    <property type="entry name" value="SelR"/>
    <property type="match status" value="1"/>
</dbReference>
<dbReference type="SUPFAM" id="SSF51316">
    <property type="entry name" value="Mss4-like"/>
    <property type="match status" value="1"/>
</dbReference>
<dbReference type="PROSITE" id="PS51790">
    <property type="entry name" value="MSRB"/>
    <property type="match status" value="1"/>
</dbReference>
<name>MSRB_LISMC</name>
<accession>C1KWF8</accession>
<organism>
    <name type="scientific">Listeria monocytogenes serotype 4b (strain CLIP80459)</name>
    <dbReference type="NCBI Taxonomy" id="568819"/>
    <lineage>
        <taxon>Bacteria</taxon>
        <taxon>Bacillati</taxon>
        <taxon>Bacillota</taxon>
        <taxon>Bacilli</taxon>
        <taxon>Bacillales</taxon>
        <taxon>Listeriaceae</taxon>
        <taxon>Listeria</taxon>
    </lineage>
</organism>
<evidence type="ECO:0000255" key="1">
    <source>
        <dbReference type="HAMAP-Rule" id="MF_01400"/>
    </source>
</evidence>
<evidence type="ECO:0000255" key="2">
    <source>
        <dbReference type="PROSITE-ProRule" id="PRU01126"/>
    </source>
</evidence>
<proteinExistence type="inferred from homology"/>
<keyword id="KW-0560">Oxidoreductase</keyword>
<sequence length="145" mass="16493">MDESKKNERLQQLTDIQYNVTQKAGTERPFQNEFYDNEAKGIYVDIVSGKPLFSSNDQYDAGCGWPSFTKPIDEAEVIEHRDLTHGMIRTEVKSADADSHLGHVFPDGPQDKGGLRYCINSAALRFIPVDKLEEEGYQAYKKIFE</sequence>
<comment type="catalytic activity">
    <reaction evidence="1">
        <text>L-methionyl-[protein] + [thioredoxin]-disulfide + H2O = L-methionyl-(R)-S-oxide-[protein] + [thioredoxin]-dithiol</text>
        <dbReference type="Rhea" id="RHEA:24164"/>
        <dbReference type="Rhea" id="RHEA-COMP:10698"/>
        <dbReference type="Rhea" id="RHEA-COMP:10700"/>
        <dbReference type="Rhea" id="RHEA-COMP:12313"/>
        <dbReference type="Rhea" id="RHEA-COMP:12314"/>
        <dbReference type="ChEBI" id="CHEBI:15377"/>
        <dbReference type="ChEBI" id="CHEBI:16044"/>
        <dbReference type="ChEBI" id="CHEBI:29950"/>
        <dbReference type="ChEBI" id="CHEBI:45764"/>
        <dbReference type="ChEBI" id="CHEBI:50058"/>
        <dbReference type="EC" id="1.8.4.12"/>
    </reaction>
</comment>
<comment type="similarity">
    <text evidence="1">Belongs to the MsrB Met sulfoxide reductase family.</text>
</comment>
<gene>
    <name evidence="1" type="primary">msrB</name>
    <name type="ordered locus">Lm4b_01875</name>
</gene>
<reference key="1">
    <citation type="journal article" date="2012" name="BMC Genomics">
        <title>Comparative genomics and transcriptomics of lineages I, II, and III strains of Listeria monocytogenes.</title>
        <authorList>
            <person name="Hain T."/>
            <person name="Ghai R."/>
            <person name="Billion A."/>
            <person name="Kuenne C.T."/>
            <person name="Steinweg C."/>
            <person name="Izar B."/>
            <person name="Mohamed W."/>
            <person name="Mraheil M."/>
            <person name="Domann E."/>
            <person name="Schaffrath S."/>
            <person name="Karst U."/>
            <person name="Goesmann A."/>
            <person name="Oehm S."/>
            <person name="Puhler A."/>
            <person name="Merkl R."/>
            <person name="Vorwerk S."/>
            <person name="Glaser P."/>
            <person name="Garrido P."/>
            <person name="Rusniok C."/>
            <person name="Buchrieser C."/>
            <person name="Goebel W."/>
            <person name="Chakraborty T."/>
        </authorList>
    </citation>
    <scope>NUCLEOTIDE SEQUENCE [LARGE SCALE GENOMIC DNA]</scope>
    <source>
        <strain>CLIP80459</strain>
    </source>
</reference>